<evidence type="ECO:0000255" key="1">
    <source>
        <dbReference type="HAMAP-Rule" id="MF_02106"/>
    </source>
</evidence>
<evidence type="ECO:0000256" key="2">
    <source>
        <dbReference type="SAM" id="MobiDB-lite"/>
    </source>
</evidence>
<dbReference type="EMBL" id="CP000854">
    <property type="protein sequence ID" value="ACC41521.1"/>
    <property type="molecule type" value="Genomic_DNA"/>
</dbReference>
<dbReference type="RefSeq" id="WP_012394770.1">
    <property type="nucleotide sequence ID" value="NC_010612.1"/>
</dbReference>
<dbReference type="SMR" id="B2HFV7"/>
<dbReference type="STRING" id="216594.MMAR_3086"/>
<dbReference type="GeneID" id="34342815"/>
<dbReference type="KEGG" id="mmi:MMAR_3086"/>
<dbReference type="eggNOG" id="ENOG50333JS">
    <property type="taxonomic scope" value="Bacteria"/>
</dbReference>
<dbReference type="HOGENOM" id="CLU_183816_1_0_11"/>
<dbReference type="UniPathway" id="UPA00997"/>
<dbReference type="Proteomes" id="UP000001190">
    <property type="component" value="Chromosome"/>
</dbReference>
<dbReference type="GO" id="GO:0070628">
    <property type="term" value="F:proteasome binding"/>
    <property type="evidence" value="ECO:0007669"/>
    <property type="project" value="UniProtKB-UniRule"/>
</dbReference>
<dbReference type="GO" id="GO:0031386">
    <property type="term" value="F:protein tag activity"/>
    <property type="evidence" value="ECO:0007669"/>
    <property type="project" value="UniProtKB-UniRule"/>
</dbReference>
<dbReference type="GO" id="GO:0019941">
    <property type="term" value="P:modification-dependent protein catabolic process"/>
    <property type="evidence" value="ECO:0007669"/>
    <property type="project" value="UniProtKB-UniRule"/>
</dbReference>
<dbReference type="GO" id="GO:0010498">
    <property type="term" value="P:proteasomal protein catabolic process"/>
    <property type="evidence" value="ECO:0007669"/>
    <property type="project" value="UniProtKB-UniRule"/>
</dbReference>
<dbReference type="GO" id="GO:0070490">
    <property type="term" value="P:protein pupylation"/>
    <property type="evidence" value="ECO:0007669"/>
    <property type="project" value="UniProtKB-UniRule"/>
</dbReference>
<dbReference type="HAMAP" id="MF_02106">
    <property type="entry name" value="Pup"/>
    <property type="match status" value="1"/>
</dbReference>
<dbReference type="InterPro" id="IPR008515">
    <property type="entry name" value="Ubiquitin-like_Pup"/>
</dbReference>
<dbReference type="NCBIfam" id="TIGR03687">
    <property type="entry name" value="pupylate_cterm"/>
    <property type="match status" value="1"/>
</dbReference>
<dbReference type="Pfam" id="PF05639">
    <property type="entry name" value="Pup"/>
    <property type="match status" value="1"/>
</dbReference>
<protein>
    <recommendedName>
        <fullName evidence="1">Prokaryotic ubiquitin-like protein Pup</fullName>
    </recommendedName>
    <alternativeName>
        <fullName evidence="1">Bacterial ubiquitin-like modifier</fullName>
    </alternativeName>
</protein>
<feature type="chain" id="PRO_0000390594" description="Prokaryotic ubiquitin-like protein Pup">
    <location>
        <begin position="1"/>
        <end position="64"/>
    </location>
</feature>
<feature type="region of interest" description="Disordered" evidence="2">
    <location>
        <begin position="1"/>
        <end position="37"/>
    </location>
</feature>
<feature type="region of interest" description="ARC ATPase binding" evidence="1">
    <location>
        <begin position="21"/>
        <end position="58"/>
    </location>
</feature>
<feature type="coiled-coil region" evidence="1">
    <location>
        <begin position="25"/>
        <end position="52"/>
    </location>
</feature>
<feature type="modified residue" description="Deamidated glutamine" evidence="1">
    <location>
        <position position="64"/>
    </location>
</feature>
<feature type="cross-link" description="Isoglutamyl lysine isopeptide (Gln-Lys) (interchain with K-? in acceptor proteins)" evidence="1">
    <location>
        <position position="64"/>
    </location>
</feature>
<reference key="1">
    <citation type="journal article" date="2008" name="Genome Res.">
        <title>Insights from the complete genome sequence of Mycobacterium marinum on the evolution of Mycobacterium tuberculosis.</title>
        <authorList>
            <person name="Stinear T.P."/>
            <person name="Seemann T."/>
            <person name="Harrison P.F."/>
            <person name="Jenkin G.A."/>
            <person name="Davies J.K."/>
            <person name="Johnson P.D."/>
            <person name="Abdellah Z."/>
            <person name="Arrowsmith C."/>
            <person name="Chillingworth T."/>
            <person name="Churcher C."/>
            <person name="Clarke K."/>
            <person name="Cronin A."/>
            <person name="Davis P."/>
            <person name="Goodhead I."/>
            <person name="Holroyd N."/>
            <person name="Jagels K."/>
            <person name="Lord A."/>
            <person name="Moule S."/>
            <person name="Mungall K."/>
            <person name="Norbertczak H."/>
            <person name="Quail M.A."/>
            <person name="Rabbinowitsch E."/>
            <person name="Walker D."/>
            <person name="White B."/>
            <person name="Whitehead S."/>
            <person name="Small P.L."/>
            <person name="Brosch R."/>
            <person name="Ramakrishnan L."/>
            <person name="Fischbach M.A."/>
            <person name="Parkhill J."/>
            <person name="Cole S.T."/>
        </authorList>
    </citation>
    <scope>NUCLEOTIDE SEQUENCE [LARGE SCALE GENOMIC DNA]</scope>
    <source>
        <strain>ATCC BAA-535 / M</strain>
    </source>
</reference>
<sequence>MAQEQTKRGGGGGDDEDVTGTTAAGQERREKLAQDTDDLLDEIDDVLEENAEDFVRAYVQKGGQ</sequence>
<accession>B2HFV7</accession>
<comment type="function">
    <text evidence="1">Protein modifier that is covalently attached to lysine residues of substrate proteins, thereby targeting them for proteasomal degradation. The tagging system is termed pupylation.</text>
</comment>
<comment type="pathway">
    <text evidence="1">Protein degradation; proteasomal Pup-dependent pathway.</text>
</comment>
<comment type="subunit">
    <text evidence="1">Strongly interacts with the proteasome-associated ATPase ARC through a hydrophobic interface; the interacting region of Pup lies in its C-terminal half. There is one Pup binding site per ARC hexamer ring.</text>
</comment>
<comment type="domain">
    <text evidence="1">The N-terminal unstructured half of Pup provides a signal required to initiate unfolding and degradation by the proteasome but is not needed for pupylation, while the C-terminal helical half of Pup interacts with ARC to target proteins to the proteasome.</text>
</comment>
<comment type="PTM">
    <text evidence="1">Is modified by deamidation of its C-terminal glutamine to glutamate by the deamidase Dop, a prerequisite to the subsequent pupylation process.</text>
</comment>
<comment type="similarity">
    <text evidence="1">Belongs to the prokaryotic ubiquitin-like protein family.</text>
</comment>
<organism>
    <name type="scientific">Mycobacterium marinum (strain ATCC BAA-535 / M)</name>
    <dbReference type="NCBI Taxonomy" id="216594"/>
    <lineage>
        <taxon>Bacteria</taxon>
        <taxon>Bacillati</taxon>
        <taxon>Actinomycetota</taxon>
        <taxon>Actinomycetes</taxon>
        <taxon>Mycobacteriales</taxon>
        <taxon>Mycobacteriaceae</taxon>
        <taxon>Mycobacterium</taxon>
        <taxon>Mycobacterium ulcerans group</taxon>
    </lineage>
</organism>
<gene>
    <name evidence="1" type="primary">pup</name>
    <name type="ordered locus">MMAR_3086</name>
</gene>
<keyword id="KW-0175">Coiled coil</keyword>
<keyword id="KW-1017">Isopeptide bond</keyword>
<keyword id="KW-1185">Reference proteome</keyword>
<keyword id="KW-0833">Ubl conjugation pathway</keyword>
<proteinExistence type="inferred from homology"/>
<name>PUP_MYCMM</name>